<reference key="1">
    <citation type="journal article" date="2006" name="J. Bacteriol.">
        <title>Comparative genomic evidence for a close relationship between the dimorphic prosthecate bacteria Hyphomonas neptunium and Caulobacter crescentus.</title>
        <authorList>
            <person name="Badger J.H."/>
            <person name="Hoover T.R."/>
            <person name="Brun Y.V."/>
            <person name="Weiner R.M."/>
            <person name="Laub M.T."/>
            <person name="Alexandre G."/>
            <person name="Mrazek J."/>
            <person name="Ren Q."/>
            <person name="Paulsen I.T."/>
            <person name="Nelson K.E."/>
            <person name="Khouri H.M."/>
            <person name="Radune D."/>
            <person name="Sosa J."/>
            <person name="Dodson R.J."/>
            <person name="Sullivan S.A."/>
            <person name="Rosovitz M.J."/>
            <person name="Madupu R."/>
            <person name="Brinkac L.M."/>
            <person name="Durkin A.S."/>
            <person name="Daugherty S.C."/>
            <person name="Kothari S.P."/>
            <person name="Giglio M.G."/>
            <person name="Zhou L."/>
            <person name="Haft D.H."/>
            <person name="Selengut J.D."/>
            <person name="Davidsen T.M."/>
            <person name="Yang Q."/>
            <person name="Zafar N."/>
            <person name="Ward N.L."/>
        </authorList>
    </citation>
    <scope>NUCLEOTIDE SEQUENCE [LARGE SCALE GENOMIC DNA]</scope>
    <source>
        <strain>ATCC 15444</strain>
    </source>
</reference>
<dbReference type="EMBL" id="CP000158">
    <property type="protein sequence ID" value="ABI77562.1"/>
    <property type="molecule type" value="Genomic_DNA"/>
</dbReference>
<dbReference type="RefSeq" id="WP_011647835.1">
    <property type="nucleotide sequence ID" value="NC_008358.1"/>
</dbReference>
<dbReference type="SMR" id="Q0BYA5"/>
<dbReference type="STRING" id="228405.HNE_2860"/>
<dbReference type="KEGG" id="hne:HNE_2860"/>
<dbReference type="eggNOG" id="COG0244">
    <property type="taxonomic scope" value="Bacteria"/>
</dbReference>
<dbReference type="HOGENOM" id="CLU_092227_0_0_5"/>
<dbReference type="Proteomes" id="UP000001959">
    <property type="component" value="Chromosome"/>
</dbReference>
<dbReference type="GO" id="GO:0015934">
    <property type="term" value="C:large ribosomal subunit"/>
    <property type="evidence" value="ECO:0007669"/>
    <property type="project" value="InterPro"/>
</dbReference>
<dbReference type="GO" id="GO:0070180">
    <property type="term" value="F:large ribosomal subunit rRNA binding"/>
    <property type="evidence" value="ECO:0007669"/>
    <property type="project" value="UniProtKB-UniRule"/>
</dbReference>
<dbReference type="GO" id="GO:0003735">
    <property type="term" value="F:structural constituent of ribosome"/>
    <property type="evidence" value="ECO:0007669"/>
    <property type="project" value="InterPro"/>
</dbReference>
<dbReference type="GO" id="GO:0006412">
    <property type="term" value="P:translation"/>
    <property type="evidence" value="ECO:0007669"/>
    <property type="project" value="UniProtKB-UniRule"/>
</dbReference>
<dbReference type="CDD" id="cd05797">
    <property type="entry name" value="Ribosomal_L10"/>
    <property type="match status" value="1"/>
</dbReference>
<dbReference type="Gene3D" id="3.30.70.1730">
    <property type="match status" value="1"/>
</dbReference>
<dbReference type="Gene3D" id="6.10.250.290">
    <property type="match status" value="1"/>
</dbReference>
<dbReference type="HAMAP" id="MF_00362">
    <property type="entry name" value="Ribosomal_uL10"/>
    <property type="match status" value="1"/>
</dbReference>
<dbReference type="InterPro" id="IPR001790">
    <property type="entry name" value="Ribosomal_uL10"/>
</dbReference>
<dbReference type="InterPro" id="IPR043141">
    <property type="entry name" value="Ribosomal_uL10-like_sf"/>
</dbReference>
<dbReference type="InterPro" id="IPR022973">
    <property type="entry name" value="Ribosomal_uL10_bac"/>
</dbReference>
<dbReference type="InterPro" id="IPR047865">
    <property type="entry name" value="Ribosomal_uL10_bac_type"/>
</dbReference>
<dbReference type="InterPro" id="IPR002363">
    <property type="entry name" value="Ribosomal_uL10_CS_bac"/>
</dbReference>
<dbReference type="NCBIfam" id="NF000955">
    <property type="entry name" value="PRK00099.1-1"/>
    <property type="match status" value="1"/>
</dbReference>
<dbReference type="PANTHER" id="PTHR11560">
    <property type="entry name" value="39S RIBOSOMAL PROTEIN L10, MITOCHONDRIAL"/>
    <property type="match status" value="1"/>
</dbReference>
<dbReference type="Pfam" id="PF00466">
    <property type="entry name" value="Ribosomal_L10"/>
    <property type="match status" value="1"/>
</dbReference>
<dbReference type="SUPFAM" id="SSF160369">
    <property type="entry name" value="Ribosomal protein L10-like"/>
    <property type="match status" value="1"/>
</dbReference>
<dbReference type="PROSITE" id="PS01109">
    <property type="entry name" value="RIBOSOMAL_L10"/>
    <property type="match status" value="1"/>
</dbReference>
<feature type="chain" id="PRO_1000005512" description="Large ribosomal subunit protein uL10">
    <location>
        <begin position="1"/>
        <end position="171"/>
    </location>
</feature>
<evidence type="ECO:0000255" key="1">
    <source>
        <dbReference type="HAMAP-Rule" id="MF_00362"/>
    </source>
</evidence>
<evidence type="ECO:0000305" key="2"/>
<protein>
    <recommendedName>
        <fullName evidence="1">Large ribosomal subunit protein uL10</fullName>
    </recommendedName>
    <alternativeName>
        <fullName evidence="2">50S ribosomal protein L10</fullName>
    </alternativeName>
</protein>
<organism>
    <name type="scientific">Hyphomonas neptunium (strain ATCC 15444)</name>
    <dbReference type="NCBI Taxonomy" id="228405"/>
    <lineage>
        <taxon>Bacteria</taxon>
        <taxon>Pseudomonadati</taxon>
        <taxon>Pseudomonadota</taxon>
        <taxon>Alphaproteobacteria</taxon>
        <taxon>Hyphomonadales</taxon>
        <taxon>Hyphomonadaceae</taxon>
        <taxon>Hyphomonas</taxon>
    </lineage>
</organism>
<gene>
    <name evidence="1" type="primary">rplJ</name>
    <name type="ordered locus">HNE_2860</name>
</gene>
<comment type="function">
    <text evidence="1">Forms part of the ribosomal stalk, playing a central role in the interaction of the ribosome with GTP-bound translation factors.</text>
</comment>
<comment type="subunit">
    <text evidence="1">Part of the ribosomal stalk of the 50S ribosomal subunit. The N-terminus interacts with L11 and the large rRNA to form the base of the stalk. The C-terminus forms an elongated spine to which L12 dimers bind in a sequential fashion forming a multimeric L10(L12)X complex.</text>
</comment>
<comment type="similarity">
    <text evidence="1">Belongs to the universal ribosomal protein uL10 family.</text>
</comment>
<keyword id="KW-1185">Reference proteome</keyword>
<keyword id="KW-0687">Ribonucleoprotein</keyword>
<keyword id="KW-0689">Ribosomal protein</keyword>
<keyword id="KW-0694">RNA-binding</keyword>
<keyword id="KW-0699">rRNA-binding</keyword>
<accession>Q0BYA5</accession>
<sequence>MDKAGKSAALENLKGVFEGAGVVVVTHYAGLTVAEMTKLRGLLRKDGAHFKVVKNRLAKIALGGVGGDKAQDLFQGPVAIAYSPDPVAAAKAADEFSRENSKLVIIGAVMGEQVLDAKGVEALAKLPSLDQLRGKIIGVIQAPATKVAGVIQAPASQLARVVSAYASKDAA</sequence>
<name>RL10_HYPNA</name>
<proteinExistence type="inferred from homology"/>